<sequence length="286" mass="32475">MKIIHAVHEMQDYSEALRKAGRRIAFVPTMGYFHEGHLDLMREGRKRSDCLVVSIYVNPTQFGASEDLEKYPRNFDRDSQLAEEVGVDVIFFPSNAEMYPVNYQTYVTVEEVTKNLCGLSRPGHFRGVATVCAKLFNMVKPHAAIFGKKDFQQLVTIKRMVADLNMDLEIVGMPTTREKDGLAMSSRNVYLSPEERESALCLSRSLLMARERYDQGERDAGRILQSIKAYIESVPSTRIDYLKICSTTTMQDVQSLDQESVLALAVFVGSTRLIDNHVFGEELNIR</sequence>
<organism>
    <name type="scientific">Syntrophus aciditrophicus (strain SB)</name>
    <dbReference type="NCBI Taxonomy" id="56780"/>
    <lineage>
        <taxon>Bacteria</taxon>
        <taxon>Pseudomonadati</taxon>
        <taxon>Thermodesulfobacteriota</taxon>
        <taxon>Syntrophia</taxon>
        <taxon>Syntrophales</taxon>
        <taxon>Syntrophaceae</taxon>
        <taxon>Syntrophus</taxon>
    </lineage>
</organism>
<dbReference type="EC" id="6.3.2.1" evidence="1"/>
<dbReference type="EMBL" id="CP000252">
    <property type="protein sequence ID" value="ABC77114.1"/>
    <property type="status" value="ALT_INIT"/>
    <property type="molecule type" value="Genomic_DNA"/>
</dbReference>
<dbReference type="RefSeq" id="WP_041584793.1">
    <property type="nucleotide sequence ID" value="NC_007759.1"/>
</dbReference>
<dbReference type="SMR" id="Q2LSQ5"/>
<dbReference type="FunCoup" id="Q2LSQ5">
    <property type="interactions" value="472"/>
</dbReference>
<dbReference type="STRING" id="56780.SYN_00420"/>
<dbReference type="KEGG" id="sat:SYN_00420"/>
<dbReference type="eggNOG" id="COG0414">
    <property type="taxonomic scope" value="Bacteria"/>
</dbReference>
<dbReference type="HOGENOM" id="CLU_047148_0_0_7"/>
<dbReference type="InParanoid" id="Q2LSQ5"/>
<dbReference type="OrthoDB" id="9773087at2"/>
<dbReference type="UniPathway" id="UPA00028">
    <property type="reaction ID" value="UER00005"/>
</dbReference>
<dbReference type="Proteomes" id="UP000001933">
    <property type="component" value="Chromosome"/>
</dbReference>
<dbReference type="GO" id="GO:0005829">
    <property type="term" value="C:cytosol"/>
    <property type="evidence" value="ECO:0007669"/>
    <property type="project" value="TreeGrafter"/>
</dbReference>
<dbReference type="GO" id="GO:0005524">
    <property type="term" value="F:ATP binding"/>
    <property type="evidence" value="ECO:0007669"/>
    <property type="project" value="UniProtKB-KW"/>
</dbReference>
<dbReference type="GO" id="GO:0004592">
    <property type="term" value="F:pantoate-beta-alanine ligase activity"/>
    <property type="evidence" value="ECO:0007669"/>
    <property type="project" value="UniProtKB-UniRule"/>
</dbReference>
<dbReference type="GO" id="GO:0015940">
    <property type="term" value="P:pantothenate biosynthetic process"/>
    <property type="evidence" value="ECO:0007669"/>
    <property type="project" value="UniProtKB-UniRule"/>
</dbReference>
<dbReference type="CDD" id="cd00560">
    <property type="entry name" value="PanC"/>
    <property type="match status" value="1"/>
</dbReference>
<dbReference type="FunFam" id="3.30.1300.10:FF:000001">
    <property type="entry name" value="Pantothenate synthetase"/>
    <property type="match status" value="1"/>
</dbReference>
<dbReference type="FunFam" id="3.40.50.620:FF:000013">
    <property type="entry name" value="Pantothenate synthetase"/>
    <property type="match status" value="1"/>
</dbReference>
<dbReference type="Gene3D" id="3.40.50.620">
    <property type="entry name" value="HUPs"/>
    <property type="match status" value="1"/>
</dbReference>
<dbReference type="Gene3D" id="3.30.1300.10">
    <property type="entry name" value="Pantoate-beta-alanine ligase, C-terminal domain"/>
    <property type="match status" value="1"/>
</dbReference>
<dbReference type="HAMAP" id="MF_00158">
    <property type="entry name" value="PanC"/>
    <property type="match status" value="1"/>
</dbReference>
<dbReference type="InterPro" id="IPR003721">
    <property type="entry name" value="Pantoate_ligase"/>
</dbReference>
<dbReference type="InterPro" id="IPR042176">
    <property type="entry name" value="Pantoate_ligase_C"/>
</dbReference>
<dbReference type="InterPro" id="IPR014729">
    <property type="entry name" value="Rossmann-like_a/b/a_fold"/>
</dbReference>
<dbReference type="NCBIfam" id="TIGR00018">
    <property type="entry name" value="panC"/>
    <property type="match status" value="1"/>
</dbReference>
<dbReference type="PANTHER" id="PTHR21299">
    <property type="entry name" value="CYTIDYLATE KINASE/PANTOATE-BETA-ALANINE LIGASE"/>
    <property type="match status" value="1"/>
</dbReference>
<dbReference type="PANTHER" id="PTHR21299:SF1">
    <property type="entry name" value="PANTOATE--BETA-ALANINE LIGASE"/>
    <property type="match status" value="1"/>
</dbReference>
<dbReference type="Pfam" id="PF02569">
    <property type="entry name" value="Pantoate_ligase"/>
    <property type="match status" value="1"/>
</dbReference>
<dbReference type="SUPFAM" id="SSF52374">
    <property type="entry name" value="Nucleotidylyl transferase"/>
    <property type="match status" value="1"/>
</dbReference>
<gene>
    <name evidence="1" type="primary">panC</name>
    <name type="ordered locus">SYNAS_12350</name>
    <name type="ORF">SYN_00420</name>
</gene>
<protein>
    <recommendedName>
        <fullName evidence="1">Pantothenate synthetase</fullName>
        <shortName evidence="1">PS</shortName>
        <ecNumber evidence="1">6.3.2.1</ecNumber>
    </recommendedName>
    <alternativeName>
        <fullName evidence="1">Pantoate--beta-alanine ligase</fullName>
    </alternativeName>
    <alternativeName>
        <fullName evidence="1">Pantoate-activating enzyme</fullName>
    </alternativeName>
</protein>
<keyword id="KW-0067">ATP-binding</keyword>
<keyword id="KW-0963">Cytoplasm</keyword>
<keyword id="KW-0436">Ligase</keyword>
<keyword id="KW-0547">Nucleotide-binding</keyword>
<keyword id="KW-0566">Pantothenate biosynthesis</keyword>
<keyword id="KW-1185">Reference proteome</keyword>
<accession>Q2LSQ5</accession>
<comment type="function">
    <text evidence="1">Catalyzes the condensation of pantoate with beta-alanine in an ATP-dependent reaction via a pantoyl-adenylate intermediate.</text>
</comment>
<comment type="catalytic activity">
    <reaction evidence="1">
        <text>(R)-pantoate + beta-alanine + ATP = (R)-pantothenate + AMP + diphosphate + H(+)</text>
        <dbReference type="Rhea" id="RHEA:10912"/>
        <dbReference type="ChEBI" id="CHEBI:15378"/>
        <dbReference type="ChEBI" id="CHEBI:15980"/>
        <dbReference type="ChEBI" id="CHEBI:29032"/>
        <dbReference type="ChEBI" id="CHEBI:30616"/>
        <dbReference type="ChEBI" id="CHEBI:33019"/>
        <dbReference type="ChEBI" id="CHEBI:57966"/>
        <dbReference type="ChEBI" id="CHEBI:456215"/>
        <dbReference type="EC" id="6.3.2.1"/>
    </reaction>
</comment>
<comment type="pathway">
    <text evidence="1">Cofactor biosynthesis; (R)-pantothenate biosynthesis; (R)-pantothenate from (R)-pantoate and beta-alanine: step 1/1.</text>
</comment>
<comment type="subunit">
    <text evidence="1">Homodimer.</text>
</comment>
<comment type="subcellular location">
    <subcellularLocation>
        <location evidence="1">Cytoplasm</location>
    </subcellularLocation>
</comment>
<comment type="miscellaneous">
    <text evidence="1">The reaction proceeds by a bi uni uni bi ping pong mechanism.</text>
</comment>
<comment type="similarity">
    <text evidence="1">Belongs to the pantothenate synthetase family.</text>
</comment>
<comment type="sequence caution" evidence="2">
    <conflict type="erroneous initiation">
        <sequence resource="EMBL-CDS" id="ABC77114"/>
    </conflict>
</comment>
<evidence type="ECO:0000255" key="1">
    <source>
        <dbReference type="HAMAP-Rule" id="MF_00158"/>
    </source>
</evidence>
<evidence type="ECO:0000305" key="2"/>
<name>PANC_SYNAS</name>
<feature type="chain" id="PRO_0000305566" description="Pantothenate synthetase">
    <location>
        <begin position="1"/>
        <end position="286"/>
    </location>
</feature>
<feature type="active site" description="Proton donor" evidence="1">
    <location>
        <position position="37"/>
    </location>
</feature>
<feature type="binding site" evidence="1">
    <location>
        <begin position="30"/>
        <end position="37"/>
    </location>
    <ligand>
        <name>ATP</name>
        <dbReference type="ChEBI" id="CHEBI:30616"/>
    </ligand>
</feature>
<feature type="binding site" evidence="1">
    <location>
        <position position="61"/>
    </location>
    <ligand>
        <name>(R)-pantoate</name>
        <dbReference type="ChEBI" id="CHEBI:15980"/>
    </ligand>
</feature>
<feature type="binding site" evidence="1">
    <location>
        <position position="61"/>
    </location>
    <ligand>
        <name>beta-alanine</name>
        <dbReference type="ChEBI" id="CHEBI:57966"/>
    </ligand>
</feature>
<feature type="binding site" evidence="1">
    <location>
        <begin position="147"/>
        <end position="150"/>
    </location>
    <ligand>
        <name>ATP</name>
        <dbReference type="ChEBI" id="CHEBI:30616"/>
    </ligand>
</feature>
<feature type="binding site" evidence="1">
    <location>
        <position position="153"/>
    </location>
    <ligand>
        <name>(R)-pantoate</name>
        <dbReference type="ChEBI" id="CHEBI:15980"/>
    </ligand>
</feature>
<feature type="binding site" evidence="1">
    <location>
        <begin position="184"/>
        <end position="187"/>
    </location>
    <ligand>
        <name>ATP</name>
        <dbReference type="ChEBI" id="CHEBI:30616"/>
    </ligand>
</feature>
<reference key="1">
    <citation type="journal article" date="2007" name="Proc. Natl. Acad. Sci. U.S.A.">
        <title>The genome of Syntrophus aciditrophicus: life at the thermodynamic limit of microbial growth.</title>
        <authorList>
            <person name="McInerney M.J."/>
            <person name="Rohlin L."/>
            <person name="Mouttaki H."/>
            <person name="Kim U."/>
            <person name="Krupp R.S."/>
            <person name="Rios-Hernandez L."/>
            <person name="Sieber J."/>
            <person name="Struchtemeyer C.G."/>
            <person name="Bhattacharyya A."/>
            <person name="Campbell J.W."/>
            <person name="Gunsalus R.P."/>
        </authorList>
    </citation>
    <scope>NUCLEOTIDE SEQUENCE [LARGE SCALE GENOMIC DNA]</scope>
    <source>
        <strain>SB</strain>
    </source>
</reference>
<proteinExistence type="inferred from homology"/>